<evidence type="ECO:0000255" key="1">
    <source>
        <dbReference type="HAMAP-Rule" id="MF_01850"/>
    </source>
</evidence>
<sequence length="310" mass="35182">MTEQIQERTKAQQYNFNKLQKRIRRNTGQAIADFNMIEDGDRIMVCLSGGKDSFTMLDILISLQKSAPISFSLVAVNLDQKQPGFPAHVLPEYLESLGVEYKIVEEDTYSIVQDKIPEGKTTCSLCSRLRRGILYRTAKELGATKIALGHHRDDILETLFLNMFYGGKMKGMPPKLVSDNGEHVVIRPLAYCREKDIIKYSDMAGYPIIPCNLCGSQPNLQRQNIKQMLNDWDKRFPGRIETMFRAMQNVVPSHLADFELFDFKSINKDSGVINGGDIGFDKEEMPVATVEDEDMVQEFDPSLKLDVTNI</sequence>
<gene>
    <name evidence="1" type="primary">ttcA</name>
    <name type="ordered locus">VV1_2608</name>
</gene>
<keyword id="KW-0004">4Fe-4S</keyword>
<keyword id="KW-0067">ATP-binding</keyword>
<keyword id="KW-0963">Cytoplasm</keyword>
<keyword id="KW-0408">Iron</keyword>
<keyword id="KW-0411">Iron-sulfur</keyword>
<keyword id="KW-0460">Magnesium</keyword>
<keyword id="KW-0479">Metal-binding</keyword>
<keyword id="KW-0547">Nucleotide-binding</keyword>
<keyword id="KW-0694">RNA-binding</keyword>
<keyword id="KW-0808">Transferase</keyword>
<keyword id="KW-0819">tRNA processing</keyword>
<keyword id="KW-0820">tRNA-binding</keyword>
<organism>
    <name type="scientific">Vibrio vulnificus (strain CMCP6)</name>
    <dbReference type="NCBI Taxonomy" id="216895"/>
    <lineage>
        <taxon>Bacteria</taxon>
        <taxon>Pseudomonadati</taxon>
        <taxon>Pseudomonadota</taxon>
        <taxon>Gammaproteobacteria</taxon>
        <taxon>Vibrionales</taxon>
        <taxon>Vibrionaceae</taxon>
        <taxon>Vibrio</taxon>
    </lineage>
</organism>
<reference key="1">
    <citation type="submission" date="2002-12" db="EMBL/GenBank/DDBJ databases">
        <title>Complete genome sequence of Vibrio vulnificus CMCP6.</title>
        <authorList>
            <person name="Rhee J.H."/>
            <person name="Kim S.Y."/>
            <person name="Chung S.S."/>
            <person name="Kim J.J."/>
            <person name="Moon Y.H."/>
            <person name="Jeong H."/>
            <person name="Choy H.E."/>
        </authorList>
    </citation>
    <scope>NUCLEOTIDE SEQUENCE [LARGE SCALE GENOMIC DNA]</scope>
    <source>
        <strain>CMCP6</strain>
    </source>
</reference>
<name>TTCA_VIBVU</name>
<feature type="chain" id="PRO_0000348866" description="tRNA-cytidine(32) 2-sulfurtransferase">
    <location>
        <begin position="1"/>
        <end position="310"/>
    </location>
</feature>
<feature type="short sequence motif" description="PP-loop motif" evidence="1">
    <location>
        <begin position="48"/>
        <end position="53"/>
    </location>
</feature>
<feature type="binding site" evidence="1">
    <location>
        <position position="123"/>
    </location>
    <ligand>
        <name>[4Fe-4S] cluster</name>
        <dbReference type="ChEBI" id="CHEBI:49883"/>
    </ligand>
</feature>
<feature type="binding site" evidence="1">
    <location>
        <position position="126"/>
    </location>
    <ligand>
        <name>[4Fe-4S] cluster</name>
        <dbReference type="ChEBI" id="CHEBI:49883"/>
    </ligand>
</feature>
<feature type="binding site" evidence="1">
    <location>
        <position position="214"/>
    </location>
    <ligand>
        <name>[4Fe-4S] cluster</name>
        <dbReference type="ChEBI" id="CHEBI:49883"/>
    </ligand>
</feature>
<comment type="function">
    <text evidence="1">Catalyzes the ATP-dependent 2-thiolation of cytidine in position 32 of tRNA, to form 2-thiocytidine (s(2)C32). The sulfur atoms are provided by the cysteine/cysteine desulfurase (IscS) system.</text>
</comment>
<comment type="catalytic activity">
    <reaction evidence="1">
        <text>cytidine(32) in tRNA + S-sulfanyl-L-cysteinyl-[cysteine desulfurase] + AH2 + ATP = 2-thiocytidine(32) in tRNA + L-cysteinyl-[cysteine desulfurase] + A + AMP + diphosphate + H(+)</text>
        <dbReference type="Rhea" id="RHEA:57048"/>
        <dbReference type="Rhea" id="RHEA-COMP:10288"/>
        <dbReference type="Rhea" id="RHEA-COMP:12157"/>
        <dbReference type="Rhea" id="RHEA-COMP:12158"/>
        <dbReference type="Rhea" id="RHEA-COMP:14821"/>
        <dbReference type="ChEBI" id="CHEBI:13193"/>
        <dbReference type="ChEBI" id="CHEBI:15378"/>
        <dbReference type="ChEBI" id="CHEBI:17499"/>
        <dbReference type="ChEBI" id="CHEBI:29950"/>
        <dbReference type="ChEBI" id="CHEBI:30616"/>
        <dbReference type="ChEBI" id="CHEBI:33019"/>
        <dbReference type="ChEBI" id="CHEBI:61963"/>
        <dbReference type="ChEBI" id="CHEBI:82748"/>
        <dbReference type="ChEBI" id="CHEBI:141453"/>
        <dbReference type="ChEBI" id="CHEBI:456215"/>
    </reaction>
    <physiologicalReaction direction="left-to-right" evidence="1">
        <dbReference type="Rhea" id="RHEA:57049"/>
    </physiologicalReaction>
</comment>
<comment type="cofactor">
    <cofactor evidence="1">
        <name>Mg(2+)</name>
        <dbReference type="ChEBI" id="CHEBI:18420"/>
    </cofactor>
</comment>
<comment type="cofactor">
    <cofactor evidence="1">
        <name>[4Fe-4S] cluster</name>
        <dbReference type="ChEBI" id="CHEBI:49883"/>
    </cofactor>
    <text evidence="1">Binds 1 [4Fe-4S] cluster per subunit. The cluster is chelated by three Cys residues, the fourth Fe has a free coordination site that may bind a sulfur atom transferred from the persulfide of IscS.</text>
</comment>
<comment type="pathway">
    <text evidence="1">tRNA modification.</text>
</comment>
<comment type="subunit">
    <text evidence="1">Homodimer.</text>
</comment>
<comment type="subcellular location">
    <subcellularLocation>
        <location evidence="1">Cytoplasm</location>
    </subcellularLocation>
</comment>
<comment type="miscellaneous">
    <text evidence="1">The thiolation reaction likely consists of two steps: a first activation step by ATP to form an adenylated intermediate of the target base of tRNA, and a second nucleophilic substitution step of the sulfur (S) atom supplied by the hydrosulfide attached to the Fe-S cluster.</text>
</comment>
<comment type="similarity">
    <text evidence="1">Belongs to the TtcA family.</text>
</comment>
<protein>
    <recommendedName>
        <fullName evidence="1">tRNA-cytidine(32) 2-sulfurtransferase</fullName>
        <ecNumber evidence="1">2.8.1.-</ecNumber>
    </recommendedName>
    <alternativeName>
        <fullName evidence="1">Two-thiocytidine biosynthesis protein A</fullName>
    </alternativeName>
    <alternativeName>
        <fullName evidence="1">tRNA 2-thiocytidine biosynthesis protein TtcA</fullName>
    </alternativeName>
</protein>
<accession>Q8D9J0</accession>
<dbReference type="EC" id="2.8.1.-" evidence="1"/>
<dbReference type="EMBL" id="AE016795">
    <property type="protein sequence ID" value="AAO10958.1"/>
    <property type="molecule type" value="Genomic_DNA"/>
</dbReference>
<dbReference type="RefSeq" id="WP_011080456.1">
    <property type="nucleotide sequence ID" value="NC_004459.3"/>
</dbReference>
<dbReference type="SMR" id="Q8D9J0"/>
<dbReference type="KEGG" id="vvu:VV1_2608"/>
<dbReference type="HOGENOM" id="CLU_026481_0_0_6"/>
<dbReference type="Proteomes" id="UP000002275">
    <property type="component" value="Chromosome 1"/>
</dbReference>
<dbReference type="GO" id="GO:0005737">
    <property type="term" value="C:cytoplasm"/>
    <property type="evidence" value="ECO:0007669"/>
    <property type="project" value="UniProtKB-SubCell"/>
</dbReference>
<dbReference type="GO" id="GO:0051539">
    <property type="term" value="F:4 iron, 4 sulfur cluster binding"/>
    <property type="evidence" value="ECO:0007669"/>
    <property type="project" value="UniProtKB-UniRule"/>
</dbReference>
<dbReference type="GO" id="GO:0005524">
    <property type="term" value="F:ATP binding"/>
    <property type="evidence" value="ECO:0007669"/>
    <property type="project" value="UniProtKB-UniRule"/>
</dbReference>
<dbReference type="GO" id="GO:0000287">
    <property type="term" value="F:magnesium ion binding"/>
    <property type="evidence" value="ECO:0007669"/>
    <property type="project" value="UniProtKB-UniRule"/>
</dbReference>
<dbReference type="GO" id="GO:0016783">
    <property type="term" value="F:sulfurtransferase activity"/>
    <property type="evidence" value="ECO:0007669"/>
    <property type="project" value="UniProtKB-UniRule"/>
</dbReference>
<dbReference type="GO" id="GO:0000049">
    <property type="term" value="F:tRNA binding"/>
    <property type="evidence" value="ECO:0007669"/>
    <property type="project" value="UniProtKB-KW"/>
</dbReference>
<dbReference type="GO" id="GO:0034227">
    <property type="term" value="P:tRNA thio-modification"/>
    <property type="evidence" value="ECO:0007669"/>
    <property type="project" value="UniProtKB-UniRule"/>
</dbReference>
<dbReference type="CDD" id="cd24138">
    <property type="entry name" value="TtcA-like"/>
    <property type="match status" value="1"/>
</dbReference>
<dbReference type="Gene3D" id="3.40.50.620">
    <property type="entry name" value="HUPs"/>
    <property type="match status" value="1"/>
</dbReference>
<dbReference type="HAMAP" id="MF_01850">
    <property type="entry name" value="TtcA"/>
    <property type="match status" value="1"/>
</dbReference>
<dbReference type="InterPro" id="IPR014729">
    <property type="entry name" value="Rossmann-like_a/b/a_fold"/>
</dbReference>
<dbReference type="InterPro" id="IPR011063">
    <property type="entry name" value="TilS/TtcA_N"/>
</dbReference>
<dbReference type="InterPro" id="IPR012089">
    <property type="entry name" value="tRNA_Cyd_32_2_STrfase"/>
</dbReference>
<dbReference type="InterPro" id="IPR035107">
    <property type="entry name" value="tRNA_thiolation_TtcA_Ctu1"/>
</dbReference>
<dbReference type="NCBIfam" id="NF007972">
    <property type="entry name" value="PRK10696.1"/>
    <property type="match status" value="1"/>
</dbReference>
<dbReference type="PANTHER" id="PTHR43686:SF1">
    <property type="entry name" value="AMINOTRAN_5 DOMAIN-CONTAINING PROTEIN"/>
    <property type="match status" value="1"/>
</dbReference>
<dbReference type="PANTHER" id="PTHR43686">
    <property type="entry name" value="SULFURTRANSFERASE-RELATED"/>
    <property type="match status" value="1"/>
</dbReference>
<dbReference type="Pfam" id="PF01171">
    <property type="entry name" value="ATP_bind_3"/>
    <property type="match status" value="1"/>
</dbReference>
<dbReference type="PIRSF" id="PIRSF004976">
    <property type="entry name" value="ATPase_YdaO"/>
    <property type="match status" value="1"/>
</dbReference>
<dbReference type="SUPFAM" id="SSF52402">
    <property type="entry name" value="Adenine nucleotide alpha hydrolases-like"/>
    <property type="match status" value="1"/>
</dbReference>
<proteinExistence type="inferred from homology"/>